<organism>
    <name type="scientific">Paraburkholderia phytofirmans (strain DSM 17436 / LMG 22146 / PsJN)</name>
    <name type="common">Burkholderia phytofirmans</name>
    <dbReference type="NCBI Taxonomy" id="398527"/>
    <lineage>
        <taxon>Bacteria</taxon>
        <taxon>Pseudomonadati</taxon>
        <taxon>Pseudomonadota</taxon>
        <taxon>Betaproteobacteria</taxon>
        <taxon>Burkholderiales</taxon>
        <taxon>Burkholderiaceae</taxon>
        <taxon>Paraburkholderia</taxon>
    </lineage>
</organism>
<protein>
    <recommendedName>
        <fullName evidence="1">4-hydroxybenzoate octaprenyltransferase</fullName>
        <ecNumber evidence="1">2.5.1.39</ecNumber>
    </recommendedName>
    <alternativeName>
        <fullName evidence="1">4-HB polyprenyltransferase</fullName>
    </alternativeName>
</protein>
<accession>B2SXA0</accession>
<proteinExistence type="inferred from homology"/>
<comment type="function">
    <text evidence="1">Catalyzes the prenylation of para-hydroxybenzoate (PHB) with an all-trans polyprenyl group. Mediates the second step in the final reaction sequence of ubiquinone-8 (UQ-8) biosynthesis, which is the condensation of the polyisoprenoid side chain with PHB, generating the first membrane-bound Q intermediate 3-octaprenyl-4-hydroxybenzoate.</text>
</comment>
<comment type="catalytic activity">
    <reaction evidence="1">
        <text>all-trans-octaprenyl diphosphate + 4-hydroxybenzoate = 4-hydroxy-3-(all-trans-octaprenyl)benzoate + diphosphate</text>
        <dbReference type="Rhea" id="RHEA:27782"/>
        <dbReference type="ChEBI" id="CHEBI:1617"/>
        <dbReference type="ChEBI" id="CHEBI:17879"/>
        <dbReference type="ChEBI" id="CHEBI:33019"/>
        <dbReference type="ChEBI" id="CHEBI:57711"/>
        <dbReference type="EC" id="2.5.1.39"/>
    </reaction>
</comment>
<comment type="cofactor">
    <cofactor evidence="1">
        <name>Mg(2+)</name>
        <dbReference type="ChEBI" id="CHEBI:18420"/>
    </cofactor>
</comment>
<comment type="pathway">
    <text evidence="1">Cofactor biosynthesis; ubiquinone biosynthesis.</text>
</comment>
<comment type="subcellular location">
    <subcellularLocation>
        <location evidence="1">Cell inner membrane</location>
        <topology evidence="1">Multi-pass membrane protein</topology>
    </subcellularLocation>
</comment>
<comment type="similarity">
    <text evidence="1">Belongs to the UbiA prenyltransferase family.</text>
</comment>
<dbReference type="EC" id="2.5.1.39" evidence="1"/>
<dbReference type="EMBL" id="CP001052">
    <property type="protein sequence ID" value="ACD15139.1"/>
    <property type="molecule type" value="Genomic_DNA"/>
</dbReference>
<dbReference type="RefSeq" id="WP_012431775.1">
    <property type="nucleotide sequence ID" value="NC_010681.1"/>
</dbReference>
<dbReference type="SMR" id="B2SXA0"/>
<dbReference type="STRING" id="398527.Bphyt_0715"/>
<dbReference type="KEGG" id="bpy:Bphyt_0715"/>
<dbReference type="eggNOG" id="COG0382">
    <property type="taxonomic scope" value="Bacteria"/>
</dbReference>
<dbReference type="HOGENOM" id="CLU_034879_1_0_4"/>
<dbReference type="OrthoDB" id="9782418at2"/>
<dbReference type="UniPathway" id="UPA00232"/>
<dbReference type="Proteomes" id="UP000001739">
    <property type="component" value="Chromosome 1"/>
</dbReference>
<dbReference type="GO" id="GO:0005886">
    <property type="term" value="C:plasma membrane"/>
    <property type="evidence" value="ECO:0007669"/>
    <property type="project" value="UniProtKB-SubCell"/>
</dbReference>
<dbReference type="GO" id="GO:0008412">
    <property type="term" value="F:4-hydroxybenzoate polyprenyltransferase activity"/>
    <property type="evidence" value="ECO:0007669"/>
    <property type="project" value="UniProtKB-UniRule"/>
</dbReference>
<dbReference type="GO" id="GO:0006744">
    <property type="term" value="P:ubiquinone biosynthetic process"/>
    <property type="evidence" value="ECO:0007669"/>
    <property type="project" value="UniProtKB-UniRule"/>
</dbReference>
<dbReference type="CDD" id="cd13959">
    <property type="entry name" value="PT_UbiA_COQ2"/>
    <property type="match status" value="1"/>
</dbReference>
<dbReference type="FunFam" id="1.10.357.140:FF:000002">
    <property type="entry name" value="4-hydroxybenzoate octaprenyltransferase"/>
    <property type="match status" value="1"/>
</dbReference>
<dbReference type="FunFam" id="1.20.120.1780:FF:000001">
    <property type="entry name" value="4-hydroxybenzoate octaprenyltransferase"/>
    <property type="match status" value="1"/>
</dbReference>
<dbReference type="Gene3D" id="1.10.357.140">
    <property type="entry name" value="UbiA prenyltransferase"/>
    <property type="match status" value="1"/>
</dbReference>
<dbReference type="Gene3D" id="1.20.120.1780">
    <property type="entry name" value="UbiA prenyltransferase"/>
    <property type="match status" value="1"/>
</dbReference>
<dbReference type="HAMAP" id="MF_01635">
    <property type="entry name" value="UbiA"/>
    <property type="match status" value="1"/>
</dbReference>
<dbReference type="InterPro" id="IPR006370">
    <property type="entry name" value="HB_polyprenyltransferase-like"/>
</dbReference>
<dbReference type="InterPro" id="IPR039653">
    <property type="entry name" value="Prenyltransferase"/>
</dbReference>
<dbReference type="InterPro" id="IPR000537">
    <property type="entry name" value="UbiA_prenyltransferase"/>
</dbReference>
<dbReference type="InterPro" id="IPR030470">
    <property type="entry name" value="UbiA_prenylTrfase_CS"/>
</dbReference>
<dbReference type="InterPro" id="IPR044878">
    <property type="entry name" value="UbiA_sf"/>
</dbReference>
<dbReference type="NCBIfam" id="TIGR01474">
    <property type="entry name" value="ubiA_proteo"/>
    <property type="match status" value="1"/>
</dbReference>
<dbReference type="PANTHER" id="PTHR11048:SF28">
    <property type="entry name" value="4-HYDROXYBENZOATE POLYPRENYLTRANSFERASE, MITOCHONDRIAL"/>
    <property type="match status" value="1"/>
</dbReference>
<dbReference type="PANTHER" id="PTHR11048">
    <property type="entry name" value="PRENYLTRANSFERASES"/>
    <property type="match status" value="1"/>
</dbReference>
<dbReference type="Pfam" id="PF01040">
    <property type="entry name" value="UbiA"/>
    <property type="match status" value="1"/>
</dbReference>
<dbReference type="PROSITE" id="PS00943">
    <property type="entry name" value="UBIA"/>
    <property type="match status" value="1"/>
</dbReference>
<gene>
    <name evidence="1" type="primary">ubiA</name>
    <name type="ordered locus">Bphyt_0715</name>
</gene>
<reference key="1">
    <citation type="journal article" date="2011" name="J. Bacteriol.">
        <title>Complete genome sequence of the plant growth-promoting endophyte Burkholderia phytofirmans strain PsJN.</title>
        <authorList>
            <person name="Weilharter A."/>
            <person name="Mitter B."/>
            <person name="Shin M.V."/>
            <person name="Chain P.S."/>
            <person name="Nowak J."/>
            <person name="Sessitsch A."/>
        </authorList>
    </citation>
    <scope>NUCLEOTIDE SEQUENCE [LARGE SCALE GENOMIC DNA]</scope>
    <source>
        <strain>DSM 17436 / LMG 22146 / PsJN</strain>
    </source>
</reference>
<sequence>MFARLPLYLRLVRMDKPIGSLLLLWPTLNALWIASDGHPTWPLLVIFTVGTVLMRSAGCAINDYADRDFDRYVKRTENRPITSGKIKAWEAVALAAALSLLAFLLILPLNTLTKELSVAALFVAGSYPFTKRFFAIPQAYLGIAFGFGIPMAFAAIQGHVPLLAWVMLLANVFWSVAYDTEYAMVDRDDDIKIGIRTSALTFGRFDVAAIMICYAATLGIYVGIGVLLGFGVLYWLGWAAAAGCAIYHYTLIRNRERMACFAAFRHNNWLGGALFVGIAAHYAAGSF</sequence>
<keyword id="KW-0997">Cell inner membrane</keyword>
<keyword id="KW-1003">Cell membrane</keyword>
<keyword id="KW-0460">Magnesium</keyword>
<keyword id="KW-0472">Membrane</keyword>
<keyword id="KW-0808">Transferase</keyword>
<keyword id="KW-0812">Transmembrane</keyword>
<keyword id="KW-1133">Transmembrane helix</keyword>
<keyword id="KW-0831">Ubiquinone biosynthesis</keyword>
<name>UBIA_PARPJ</name>
<evidence type="ECO:0000255" key="1">
    <source>
        <dbReference type="HAMAP-Rule" id="MF_01635"/>
    </source>
</evidence>
<feature type="chain" id="PRO_1000186659" description="4-hydroxybenzoate octaprenyltransferase">
    <location>
        <begin position="1"/>
        <end position="287"/>
    </location>
</feature>
<feature type="transmembrane region" description="Helical" evidence="1">
    <location>
        <begin position="30"/>
        <end position="50"/>
    </location>
</feature>
<feature type="transmembrane region" description="Helical" evidence="1">
    <location>
        <begin position="89"/>
        <end position="109"/>
    </location>
</feature>
<feature type="transmembrane region" description="Helical" evidence="1">
    <location>
        <begin position="133"/>
        <end position="153"/>
    </location>
</feature>
<feature type="transmembrane region" description="Helical" evidence="1">
    <location>
        <begin position="158"/>
        <end position="178"/>
    </location>
</feature>
<feature type="transmembrane region" description="Helical" evidence="1">
    <location>
        <begin position="199"/>
        <end position="221"/>
    </location>
</feature>
<feature type="transmembrane region" description="Helical" evidence="1">
    <location>
        <begin position="267"/>
        <end position="287"/>
    </location>
</feature>